<name>NTPP_EHRRG</name>
<reference key="1">
    <citation type="journal article" date="2006" name="J. Bacteriol.">
        <title>Comparative genomic analysis of three strains of Ehrlichia ruminantium reveals an active process of genome size plasticity.</title>
        <authorList>
            <person name="Frutos R."/>
            <person name="Viari A."/>
            <person name="Ferraz C."/>
            <person name="Morgat A."/>
            <person name="Eychenie S."/>
            <person name="Kandassamy Y."/>
            <person name="Chantal I."/>
            <person name="Bensaid A."/>
            <person name="Coissac E."/>
            <person name="Vachiery N."/>
            <person name="Demaille J."/>
            <person name="Martinez D."/>
        </authorList>
    </citation>
    <scope>NUCLEOTIDE SEQUENCE [LARGE SCALE GENOMIC DNA]</scope>
    <source>
        <strain>Gardel</strain>
    </source>
</reference>
<dbReference type="EC" id="3.6.1.9" evidence="1"/>
<dbReference type="EMBL" id="CR925677">
    <property type="protein sequence ID" value="CAI27977.1"/>
    <property type="molecule type" value="Genomic_DNA"/>
</dbReference>
<dbReference type="RefSeq" id="WP_011255640.1">
    <property type="nucleotide sequence ID" value="NC_006831.1"/>
</dbReference>
<dbReference type="SMR" id="Q5FGZ7"/>
<dbReference type="KEGG" id="erg:ERGA_CDS_05250"/>
<dbReference type="HOGENOM" id="CLU_040416_2_0_5"/>
<dbReference type="OrthoDB" id="9807767at2"/>
<dbReference type="Proteomes" id="UP000000533">
    <property type="component" value="Chromosome"/>
</dbReference>
<dbReference type="GO" id="GO:0005737">
    <property type="term" value="C:cytoplasm"/>
    <property type="evidence" value="ECO:0007669"/>
    <property type="project" value="UniProtKB-SubCell"/>
</dbReference>
<dbReference type="GO" id="GO:0047429">
    <property type="term" value="F:nucleoside triphosphate diphosphatase activity"/>
    <property type="evidence" value="ECO:0007669"/>
    <property type="project" value="UniProtKB-EC"/>
</dbReference>
<dbReference type="GO" id="GO:0009117">
    <property type="term" value="P:nucleotide metabolic process"/>
    <property type="evidence" value="ECO:0007669"/>
    <property type="project" value="UniProtKB-KW"/>
</dbReference>
<dbReference type="CDD" id="cd00555">
    <property type="entry name" value="Maf"/>
    <property type="match status" value="1"/>
</dbReference>
<dbReference type="Gene3D" id="3.90.950.10">
    <property type="match status" value="1"/>
</dbReference>
<dbReference type="HAMAP" id="MF_00528">
    <property type="entry name" value="Maf"/>
    <property type="match status" value="1"/>
</dbReference>
<dbReference type="InterPro" id="IPR029001">
    <property type="entry name" value="ITPase-like_fam"/>
</dbReference>
<dbReference type="InterPro" id="IPR003697">
    <property type="entry name" value="Maf-like"/>
</dbReference>
<dbReference type="NCBIfam" id="TIGR00172">
    <property type="entry name" value="maf"/>
    <property type="match status" value="1"/>
</dbReference>
<dbReference type="NCBIfam" id="NF010946">
    <property type="entry name" value="PRK14366.1"/>
    <property type="match status" value="1"/>
</dbReference>
<dbReference type="PANTHER" id="PTHR43213">
    <property type="entry name" value="BIFUNCTIONAL DTTP/UTP PYROPHOSPHATASE/METHYLTRANSFERASE PROTEIN-RELATED"/>
    <property type="match status" value="1"/>
</dbReference>
<dbReference type="PANTHER" id="PTHR43213:SF5">
    <property type="entry name" value="BIFUNCTIONAL DTTP_UTP PYROPHOSPHATASE_METHYLTRANSFERASE PROTEIN-RELATED"/>
    <property type="match status" value="1"/>
</dbReference>
<dbReference type="Pfam" id="PF02545">
    <property type="entry name" value="Maf"/>
    <property type="match status" value="1"/>
</dbReference>
<dbReference type="PIRSF" id="PIRSF006305">
    <property type="entry name" value="Maf"/>
    <property type="match status" value="1"/>
</dbReference>
<dbReference type="SUPFAM" id="SSF52972">
    <property type="entry name" value="ITPase-like"/>
    <property type="match status" value="1"/>
</dbReference>
<proteinExistence type="inferred from homology"/>
<comment type="function">
    <text evidence="1">Nucleoside triphosphate pyrophosphatase. May have a dual role in cell division arrest and in preventing the incorporation of modified nucleotides into cellular nucleic acids.</text>
</comment>
<comment type="catalytic activity">
    <reaction evidence="1">
        <text>a ribonucleoside 5'-triphosphate + H2O = a ribonucleoside 5'-phosphate + diphosphate + H(+)</text>
        <dbReference type="Rhea" id="RHEA:23996"/>
        <dbReference type="ChEBI" id="CHEBI:15377"/>
        <dbReference type="ChEBI" id="CHEBI:15378"/>
        <dbReference type="ChEBI" id="CHEBI:33019"/>
        <dbReference type="ChEBI" id="CHEBI:58043"/>
        <dbReference type="ChEBI" id="CHEBI:61557"/>
        <dbReference type="EC" id="3.6.1.9"/>
    </reaction>
</comment>
<comment type="catalytic activity">
    <reaction evidence="1">
        <text>a 2'-deoxyribonucleoside 5'-triphosphate + H2O = a 2'-deoxyribonucleoside 5'-phosphate + diphosphate + H(+)</text>
        <dbReference type="Rhea" id="RHEA:44644"/>
        <dbReference type="ChEBI" id="CHEBI:15377"/>
        <dbReference type="ChEBI" id="CHEBI:15378"/>
        <dbReference type="ChEBI" id="CHEBI:33019"/>
        <dbReference type="ChEBI" id="CHEBI:61560"/>
        <dbReference type="ChEBI" id="CHEBI:65317"/>
        <dbReference type="EC" id="3.6.1.9"/>
    </reaction>
</comment>
<comment type="cofactor">
    <cofactor evidence="1">
        <name>a divalent metal cation</name>
        <dbReference type="ChEBI" id="CHEBI:60240"/>
    </cofactor>
</comment>
<comment type="subcellular location">
    <subcellularLocation>
        <location evidence="1">Cytoplasm</location>
    </subcellularLocation>
</comment>
<comment type="similarity">
    <text evidence="1">Belongs to the Maf family.</text>
</comment>
<accession>Q5FGZ7</accession>
<feature type="chain" id="PRO_0000267304" description="Nucleoside triphosphate pyrophosphatase">
    <location>
        <begin position="1"/>
        <end position="192"/>
    </location>
</feature>
<feature type="active site" description="Proton acceptor" evidence="1">
    <location>
        <position position="73"/>
    </location>
</feature>
<sequence length="192" mass="21652">MFKFDNLILASSSKQRLCLLNQLGVLPGEIVIPNIDESPLKKELPKIYSMRVAKEKVIKVSLLYPKRFILGADTVVCCGRKILPKAETEDQAFEILELISGRRHRVYTSVYLYVPGKKLHYRNVMTVVKIKRLSVKEINSYILSGEWKGKAGACNIQGNAGKFVISMNGSYSSVIGLPLYETYSILSQYFPI</sequence>
<evidence type="ECO:0000255" key="1">
    <source>
        <dbReference type="HAMAP-Rule" id="MF_00528"/>
    </source>
</evidence>
<organism>
    <name type="scientific">Ehrlichia ruminantium (strain Gardel)</name>
    <dbReference type="NCBI Taxonomy" id="302409"/>
    <lineage>
        <taxon>Bacteria</taxon>
        <taxon>Pseudomonadati</taxon>
        <taxon>Pseudomonadota</taxon>
        <taxon>Alphaproteobacteria</taxon>
        <taxon>Rickettsiales</taxon>
        <taxon>Anaplasmataceae</taxon>
        <taxon>Ehrlichia</taxon>
    </lineage>
</organism>
<protein>
    <recommendedName>
        <fullName evidence="1">Nucleoside triphosphate pyrophosphatase</fullName>
        <ecNumber evidence="1">3.6.1.9</ecNumber>
    </recommendedName>
    <alternativeName>
        <fullName evidence="1">Nucleotide pyrophosphatase</fullName>
        <shortName evidence="1">Nucleotide PPase</shortName>
    </alternativeName>
</protein>
<gene>
    <name type="ordered locus">ERGA_CDS_05250</name>
</gene>
<keyword id="KW-0963">Cytoplasm</keyword>
<keyword id="KW-0378">Hydrolase</keyword>
<keyword id="KW-0546">Nucleotide metabolism</keyword>